<sequence length="267" mass="28120">MTRIAIVGASGRMGKVLVEAVCDNPDASLGAASVRVGSSLVGADAGEIAGLGKKGVACVDDLAQVMDDFDVIIDFTSPETTLELLALCRKEGKAIVIGTTGFSDQQKTLLAEAAQDCPVVFAPNMSVGVNLLLNILALTAKTLGDDYDVEVIEAHHRFKKDAPSGTALRLGEVVAEAMGRNLNECAVYGREGITGERDKKTIGFETIRAGDIVGEHTVMFATMGERIEITHKASSRMTFAKGAVKAALWLHGVAPGLYDMQDVLGLK</sequence>
<feature type="chain" id="PRO_1000008570" description="4-hydroxy-tetrahydrodipicolinate reductase">
    <location>
        <begin position="1"/>
        <end position="267"/>
    </location>
</feature>
<feature type="active site" description="Proton donor/acceptor" evidence="1">
    <location>
        <position position="155"/>
    </location>
</feature>
<feature type="active site" description="Proton donor" evidence="1">
    <location>
        <position position="159"/>
    </location>
</feature>
<feature type="binding site" evidence="1">
    <location>
        <begin position="8"/>
        <end position="13"/>
    </location>
    <ligand>
        <name>NAD(+)</name>
        <dbReference type="ChEBI" id="CHEBI:57540"/>
    </ligand>
</feature>
<feature type="binding site" evidence="1">
    <location>
        <position position="35"/>
    </location>
    <ligand>
        <name>NADP(+)</name>
        <dbReference type="ChEBI" id="CHEBI:58349"/>
    </ligand>
</feature>
<feature type="binding site" evidence="1">
    <location>
        <begin position="98"/>
        <end position="100"/>
    </location>
    <ligand>
        <name>NAD(+)</name>
        <dbReference type="ChEBI" id="CHEBI:57540"/>
    </ligand>
</feature>
<feature type="binding site" evidence="1">
    <location>
        <begin position="122"/>
        <end position="125"/>
    </location>
    <ligand>
        <name>NAD(+)</name>
        <dbReference type="ChEBI" id="CHEBI:57540"/>
    </ligand>
</feature>
<feature type="binding site" evidence="1">
    <location>
        <position position="156"/>
    </location>
    <ligand>
        <name>(S)-2,3,4,5-tetrahydrodipicolinate</name>
        <dbReference type="ChEBI" id="CHEBI:16845"/>
    </ligand>
</feature>
<feature type="binding site" evidence="1">
    <location>
        <begin position="165"/>
        <end position="166"/>
    </location>
    <ligand>
        <name>(S)-2,3,4,5-tetrahydrodipicolinate</name>
        <dbReference type="ChEBI" id="CHEBI:16845"/>
    </ligand>
</feature>
<comment type="function">
    <text evidence="1">Catalyzes the conversion of 4-hydroxy-tetrahydrodipicolinate (HTPA) to tetrahydrodipicolinate.</text>
</comment>
<comment type="catalytic activity">
    <reaction evidence="1">
        <text>(S)-2,3,4,5-tetrahydrodipicolinate + NAD(+) + H2O = (2S,4S)-4-hydroxy-2,3,4,5-tetrahydrodipicolinate + NADH + H(+)</text>
        <dbReference type="Rhea" id="RHEA:35323"/>
        <dbReference type="ChEBI" id="CHEBI:15377"/>
        <dbReference type="ChEBI" id="CHEBI:15378"/>
        <dbReference type="ChEBI" id="CHEBI:16845"/>
        <dbReference type="ChEBI" id="CHEBI:57540"/>
        <dbReference type="ChEBI" id="CHEBI:57945"/>
        <dbReference type="ChEBI" id="CHEBI:67139"/>
        <dbReference type="EC" id="1.17.1.8"/>
    </reaction>
</comment>
<comment type="catalytic activity">
    <reaction evidence="1">
        <text>(S)-2,3,4,5-tetrahydrodipicolinate + NADP(+) + H2O = (2S,4S)-4-hydroxy-2,3,4,5-tetrahydrodipicolinate + NADPH + H(+)</text>
        <dbReference type="Rhea" id="RHEA:35331"/>
        <dbReference type="ChEBI" id="CHEBI:15377"/>
        <dbReference type="ChEBI" id="CHEBI:15378"/>
        <dbReference type="ChEBI" id="CHEBI:16845"/>
        <dbReference type="ChEBI" id="CHEBI:57783"/>
        <dbReference type="ChEBI" id="CHEBI:58349"/>
        <dbReference type="ChEBI" id="CHEBI:67139"/>
        <dbReference type="EC" id="1.17.1.8"/>
    </reaction>
</comment>
<comment type="pathway">
    <text evidence="1">Amino-acid biosynthesis; L-lysine biosynthesis via DAP pathway; (S)-tetrahydrodipicolinate from L-aspartate: step 4/4.</text>
</comment>
<comment type="subcellular location">
    <subcellularLocation>
        <location evidence="1">Cytoplasm</location>
    </subcellularLocation>
</comment>
<comment type="similarity">
    <text evidence="1">Belongs to the DapB family.</text>
</comment>
<comment type="caution">
    <text evidence="2">Was originally thought to be a dihydrodipicolinate reductase (DHDPR), catalyzing the conversion of dihydrodipicolinate to tetrahydrodipicolinate. However, it was shown in E.coli that the substrate of the enzymatic reaction is not dihydrodipicolinate (DHDP) but in fact (2S,4S)-4-hydroxy-2,3,4,5-tetrahydrodipicolinic acid (HTPA), the product released by the DapA-catalyzed reaction.</text>
</comment>
<proteinExistence type="inferred from homology"/>
<gene>
    <name evidence="1" type="primary">dapB</name>
    <name type="ordered locus">HCH_01226</name>
</gene>
<dbReference type="EC" id="1.17.1.8" evidence="1"/>
<dbReference type="EMBL" id="CP000155">
    <property type="protein sequence ID" value="ABC28098.1"/>
    <property type="molecule type" value="Genomic_DNA"/>
</dbReference>
<dbReference type="RefSeq" id="WP_011395171.1">
    <property type="nucleotide sequence ID" value="NC_007645.1"/>
</dbReference>
<dbReference type="SMR" id="Q2SMM6"/>
<dbReference type="STRING" id="349521.HCH_01226"/>
<dbReference type="KEGG" id="hch:HCH_01226"/>
<dbReference type="eggNOG" id="COG0289">
    <property type="taxonomic scope" value="Bacteria"/>
</dbReference>
<dbReference type="HOGENOM" id="CLU_047479_2_1_6"/>
<dbReference type="OrthoDB" id="9790352at2"/>
<dbReference type="UniPathway" id="UPA00034">
    <property type="reaction ID" value="UER00018"/>
</dbReference>
<dbReference type="Proteomes" id="UP000000238">
    <property type="component" value="Chromosome"/>
</dbReference>
<dbReference type="GO" id="GO:0005829">
    <property type="term" value="C:cytosol"/>
    <property type="evidence" value="ECO:0007669"/>
    <property type="project" value="TreeGrafter"/>
</dbReference>
<dbReference type="GO" id="GO:0008839">
    <property type="term" value="F:4-hydroxy-tetrahydrodipicolinate reductase"/>
    <property type="evidence" value="ECO:0007669"/>
    <property type="project" value="UniProtKB-EC"/>
</dbReference>
<dbReference type="GO" id="GO:0051287">
    <property type="term" value="F:NAD binding"/>
    <property type="evidence" value="ECO:0007669"/>
    <property type="project" value="UniProtKB-UniRule"/>
</dbReference>
<dbReference type="GO" id="GO:0050661">
    <property type="term" value="F:NADP binding"/>
    <property type="evidence" value="ECO:0007669"/>
    <property type="project" value="UniProtKB-UniRule"/>
</dbReference>
<dbReference type="GO" id="GO:0016726">
    <property type="term" value="F:oxidoreductase activity, acting on CH or CH2 groups, NAD or NADP as acceptor"/>
    <property type="evidence" value="ECO:0007669"/>
    <property type="project" value="UniProtKB-UniRule"/>
</dbReference>
<dbReference type="GO" id="GO:0019877">
    <property type="term" value="P:diaminopimelate biosynthetic process"/>
    <property type="evidence" value="ECO:0007669"/>
    <property type="project" value="UniProtKB-UniRule"/>
</dbReference>
<dbReference type="GO" id="GO:0009089">
    <property type="term" value="P:lysine biosynthetic process via diaminopimelate"/>
    <property type="evidence" value="ECO:0007669"/>
    <property type="project" value="UniProtKB-UniRule"/>
</dbReference>
<dbReference type="CDD" id="cd02274">
    <property type="entry name" value="DHDPR_N"/>
    <property type="match status" value="1"/>
</dbReference>
<dbReference type="FunFam" id="3.30.360.10:FF:000004">
    <property type="entry name" value="4-hydroxy-tetrahydrodipicolinate reductase"/>
    <property type="match status" value="1"/>
</dbReference>
<dbReference type="FunFam" id="3.40.50.720:FF:000048">
    <property type="entry name" value="4-hydroxy-tetrahydrodipicolinate reductase"/>
    <property type="match status" value="1"/>
</dbReference>
<dbReference type="Gene3D" id="3.30.360.10">
    <property type="entry name" value="Dihydrodipicolinate Reductase, domain 2"/>
    <property type="match status" value="1"/>
</dbReference>
<dbReference type="Gene3D" id="3.40.50.720">
    <property type="entry name" value="NAD(P)-binding Rossmann-like Domain"/>
    <property type="match status" value="1"/>
</dbReference>
<dbReference type="HAMAP" id="MF_00102">
    <property type="entry name" value="DapB"/>
    <property type="match status" value="1"/>
</dbReference>
<dbReference type="InterPro" id="IPR022663">
    <property type="entry name" value="DapB_C"/>
</dbReference>
<dbReference type="InterPro" id="IPR000846">
    <property type="entry name" value="DapB_N"/>
</dbReference>
<dbReference type="InterPro" id="IPR022664">
    <property type="entry name" value="DapB_N_CS"/>
</dbReference>
<dbReference type="InterPro" id="IPR023940">
    <property type="entry name" value="DHDPR_bac"/>
</dbReference>
<dbReference type="InterPro" id="IPR036291">
    <property type="entry name" value="NAD(P)-bd_dom_sf"/>
</dbReference>
<dbReference type="NCBIfam" id="TIGR00036">
    <property type="entry name" value="dapB"/>
    <property type="match status" value="1"/>
</dbReference>
<dbReference type="PANTHER" id="PTHR20836:SF0">
    <property type="entry name" value="4-HYDROXY-TETRAHYDRODIPICOLINATE REDUCTASE 1, CHLOROPLASTIC-RELATED"/>
    <property type="match status" value="1"/>
</dbReference>
<dbReference type="PANTHER" id="PTHR20836">
    <property type="entry name" value="DIHYDRODIPICOLINATE REDUCTASE"/>
    <property type="match status" value="1"/>
</dbReference>
<dbReference type="Pfam" id="PF05173">
    <property type="entry name" value="DapB_C"/>
    <property type="match status" value="1"/>
</dbReference>
<dbReference type="Pfam" id="PF01113">
    <property type="entry name" value="DapB_N"/>
    <property type="match status" value="1"/>
</dbReference>
<dbReference type="PIRSF" id="PIRSF000161">
    <property type="entry name" value="DHPR"/>
    <property type="match status" value="1"/>
</dbReference>
<dbReference type="SUPFAM" id="SSF55347">
    <property type="entry name" value="Glyceraldehyde-3-phosphate dehydrogenase-like, C-terminal domain"/>
    <property type="match status" value="1"/>
</dbReference>
<dbReference type="SUPFAM" id="SSF51735">
    <property type="entry name" value="NAD(P)-binding Rossmann-fold domains"/>
    <property type="match status" value="1"/>
</dbReference>
<dbReference type="PROSITE" id="PS01298">
    <property type="entry name" value="DAPB"/>
    <property type="match status" value="1"/>
</dbReference>
<organism>
    <name type="scientific">Hahella chejuensis (strain KCTC 2396)</name>
    <dbReference type="NCBI Taxonomy" id="349521"/>
    <lineage>
        <taxon>Bacteria</taxon>
        <taxon>Pseudomonadati</taxon>
        <taxon>Pseudomonadota</taxon>
        <taxon>Gammaproteobacteria</taxon>
        <taxon>Oceanospirillales</taxon>
        <taxon>Hahellaceae</taxon>
        <taxon>Hahella</taxon>
    </lineage>
</organism>
<keyword id="KW-0028">Amino-acid biosynthesis</keyword>
<keyword id="KW-0963">Cytoplasm</keyword>
<keyword id="KW-0220">Diaminopimelate biosynthesis</keyword>
<keyword id="KW-0457">Lysine biosynthesis</keyword>
<keyword id="KW-0520">NAD</keyword>
<keyword id="KW-0521">NADP</keyword>
<keyword id="KW-0560">Oxidoreductase</keyword>
<keyword id="KW-1185">Reference proteome</keyword>
<accession>Q2SMM6</accession>
<name>DAPB_HAHCH</name>
<evidence type="ECO:0000255" key="1">
    <source>
        <dbReference type="HAMAP-Rule" id="MF_00102"/>
    </source>
</evidence>
<evidence type="ECO:0000305" key="2"/>
<reference key="1">
    <citation type="journal article" date="2005" name="Nucleic Acids Res.">
        <title>Genomic blueprint of Hahella chejuensis, a marine microbe producing an algicidal agent.</title>
        <authorList>
            <person name="Jeong H."/>
            <person name="Yim J.H."/>
            <person name="Lee C."/>
            <person name="Choi S.-H."/>
            <person name="Park Y.K."/>
            <person name="Yoon S.H."/>
            <person name="Hur C.-G."/>
            <person name="Kang H.-Y."/>
            <person name="Kim D."/>
            <person name="Lee H.H."/>
            <person name="Park K.H."/>
            <person name="Park S.-H."/>
            <person name="Park H.-S."/>
            <person name="Lee H.K."/>
            <person name="Oh T.K."/>
            <person name="Kim J.F."/>
        </authorList>
    </citation>
    <scope>NUCLEOTIDE SEQUENCE [LARGE SCALE GENOMIC DNA]</scope>
    <source>
        <strain>KCTC 2396</strain>
    </source>
</reference>
<protein>
    <recommendedName>
        <fullName evidence="1">4-hydroxy-tetrahydrodipicolinate reductase</fullName>
        <shortName evidence="1">HTPA reductase</shortName>
        <ecNumber evidence="1">1.17.1.8</ecNumber>
    </recommendedName>
</protein>